<comment type="function">
    <text evidence="1">Condenses 4-methyl-5-(beta-hydroxyethyl)thiazole monophosphate (THZ-P) and 2-methyl-4-amino-5-hydroxymethyl pyrimidine pyrophosphate (HMP-PP) to form thiamine monophosphate (TMP).</text>
</comment>
<comment type="catalytic activity">
    <reaction evidence="1">
        <text>2-[(2R,5Z)-2-carboxy-4-methylthiazol-5(2H)-ylidene]ethyl phosphate + 4-amino-2-methyl-5-(diphosphooxymethyl)pyrimidine + 2 H(+) = thiamine phosphate + CO2 + diphosphate</text>
        <dbReference type="Rhea" id="RHEA:47844"/>
        <dbReference type="ChEBI" id="CHEBI:15378"/>
        <dbReference type="ChEBI" id="CHEBI:16526"/>
        <dbReference type="ChEBI" id="CHEBI:33019"/>
        <dbReference type="ChEBI" id="CHEBI:37575"/>
        <dbReference type="ChEBI" id="CHEBI:57841"/>
        <dbReference type="ChEBI" id="CHEBI:62899"/>
        <dbReference type="EC" id="2.5.1.3"/>
    </reaction>
</comment>
<comment type="catalytic activity">
    <reaction evidence="1">
        <text>2-(2-carboxy-4-methylthiazol-5-yl)ethyl phosphate + 4-amino-2-methyl-5-(diphosphooxymethyl)pyrimidine + 2 H(+) = thiamine phosphate + CO2 + diphosphate</text>
        <dbReference type="Rhea" id="RHEA:47848"/>
        <dbReference type="ChEBI" id="CHEBI:15378"/>
        <dbReference type="ChEBI" id="CHEBI:16526"/>
        <dbReference type="ChEBI" id="CHEBI:33019"/>
        <dbReference type="ChEBI" id="CHEBI:37575"/>
        <dbReference type="ChEBI" id="CHEBI:57841"/>
        <dbReference type="ChEBI" id="CHEBI:62890"/>
        <dbReference type="EC" id="2.5.1.3"/>
    </reaction>
</comment>
<comment type="catalytic activity">
    <reaction evidence="1">
        <text>4-methyl-5-(2-phosphooxyethyl)-thiazole + 4-amino-2-methyl-5-(diphosphooxymethyl)pyrimidine + H(+) = thiamine phosphate + diphosphate</text>
        <dbReference type="Rhea" id="RHEA:22328"/>
        <dbReference type="ChEBI" id="CHEBI:15378"/>
        <dbReference type="ChEBI" id="CHEBI:33019"/>
        <dbReference type="ChEBI" id="CHEBI:37575"/>
        <dbReference type="ChEBI" id="CHEBI:57841"/>
        <dbReference type="ChEBI" id="CHEBI:58296"/>
        <dbReference type="EC" id="2.5.1.3"/>
    </reaction>
</comment>
<comment type="cofactor">
    <cofactor evidence="1">
        <name>Mg(2+)</name>
        <dbReference type="ChEBI" id="CHEBI:18420"/>
    </cofactor>
    <text evidence="1">Binds 1 Mg(2+) ion per subunit.</text>
</comment>
<comment type="pathway">
    <text evidence="1">Cofactor biosynthesis; thiamine diphosphate biosynthesis; thiamine phosphate from 4-amino-2-methyl-5-diphosphomethylpyrimidine and 4-methyl-5-(2-phosphoethyl)-thiazole: step 1/1.</text>
</comment>
<comment type="similarity">
    <text evidence="1">Belongs to the thiamine-phosphate synthase family.</text>
</comment>
<dbReference type="EC" id="2.5.1.3" evidence="1"/>
<dbReference type="EMBL" id="AM408590">
    <property type="protein sequence ID" value="CAL70438.1"/>
    <property type="molecule type" value="Genomic_DNA"/>
</dbReference>
<dbReference type="RefSeq" id="WP_003402115.1">
    <property type="nucleotide sequence ID" value="NC_008769.1"/>
</dbReference>
<dbReference type="SMR" id="A1KFN6"/>
<dbReference type="KEGG" id="mbb:BCG_0453c"/>
<dbReference type="HOGENOM" id="CLU_018272_3_0_11"/>
<dbReference type="UniPathway" id="UPA00060">
    <property type="reaction ID" value="UER00141"/>
</dbReference>
<dbReference type="Proteomes" id="UP000001472">
    <property type="component" value="Chromosome"/>
</dbReference>
<dbReference type="GO" id="GO:0005737">
    <property type="term" value="C:cytoplasm"/>
    <property type="evidence" value="ECO:0007669"/>
    <property type="project" value="TreeGrafter"/>
</dbReference>
<dbReference type="GO" id="GO:0000287">
    <property type="term" value="F:magnesium ion binding"/>
    <property type="evidence" value="ECO:0007669"/>
    <property type="project" value="UniProtKB-UniRule"/>
</dbReference>
<dbReference type="GO" id="GO:0004789">
    <property type="term" value="F:thiamine-phosphate diphosphorylase activity"/>
    <property type="evidence" value="ECO:0007669"/>
    <property type="project" value="UniProtKB-UniRule"/>
</dbReference>
<dbReference type="GO" id="GO:0009228">
    <property type="term" value="P:thiamine biosynthetic process"/>
    <property type="evidence" value="ECO:0007669"/>
    <property type="project" value="UniProtKB-KW"/>
</dbReference>
<dbReference type="GO" id="GO:0009229">
    <property type="term" value="P:thiamine diphosphate biosynthetic process"/>
    <property type="evidence" value="ECO:0007669"/>
    <property type="project" value="UniProtKB-UniRule"/>
</dbReference>
<dbReference type="CDD" id="cd00564">
    <property type="entry name" value="TMP_TenI"/>
    <property type="match status" value="1"/>
</dbReference>
<dbReference type="FunFam" id="3.20.20.70:FF:000178">
    <property type="entry name" value="Thiamine-phosphate synthase"/>
    <property type="match status" value="1"/>
</dbReference>
<dbReference type="Gene3D" id="3.20.20.70">
    <property type="entry name" value="Aldolase class I"/>
    <property type="match status" value="1"/>
</dbReference>
<dbReference type="HAMAP" id="MF_00097">
    <property type="entry name" value="TMP_synthase"/>
    <property type="match status" value="1"/>
</dbReference>
<dbReference type="InterPro" id="IPR013785">
    <property type="entry name" value="Aldolase_TIM"/>
</dbReference>
<dbReference type="InterPro" id="IPR036206">
    <property type="entry name" value="ThiamineP_synth_sf"/>
</dbReference>
<dbReference type="InterPro" id="IPR022998">
    <property type="entry name" value="ThiamineP_synth_TenI"/>
</dbReference>
<dbReference type="InterPro" id="IPR034291">
    <property type="entry name" value="TMP_synthase"/>
</dbReference>
<dbReference type="NCBIfam" id="TIGR00693">
    <property type="entry name" value="thiE"/>
    <property type="match status" value="1"/>
</dbReference>
<dbReference type="PANTHER" id="PTHR20857">
    <property type="entry name" value="THIAMINE-PHOSPHATE PYROPHOSPHORYLASE"/>
    <property type="match status" value="1"/>
</dbReference>
<dbReference type="PANTHER" id="PTHR20857:SF15">
    <property type="entry name" value="THIAMINE-PHOSPHATE SYNTHASE"/>
    <property type="match status" value="1"/>
</dbReference>
<dbReference type="Pfam" id="PF02581">
    <property type="entry name" value="TMP-TENI"/>
    <property type="match status" value="1"/>
</dbReference>
<dbReference type="SUPFAM" id="SSF51391">
    <property type="entry name" value="Thiamin phosphate synthase"/>
    <property type="match status" value="1"/>
</dbReference>
<organism>
    <name type="scientific">Mycobacterium bovis (strain BCG / Pasteur 1173P2)</name>
    <dbReference type="NCBI Taxonomy" id="410289"/>
    <lineage>
        <taxon>Bacteria</taxon>
        <taxon>Bacillati</taxon>
        <taxon>Actinomycetota</taxon>
        <taxon>Actinomycetes</taxon>
        <taxon>Mycobacteriales</taxon>
        <taxon>Mycobacteriaceae</taxon>
        <taxon>Mycobacterium</taxon>
        <taxon>Mycobacterium tuberculosis complex</taxon>
    </lineage>
</organism>
<keyword id="KW-0460">Magnesium</keyword>
<keyword id="KW-0479">Metal-binding</keyword>
<keyword id="KW-0784">Thiamine biosynthesis</keyword>
<keyword id="KW-0808">Transferase</keyword>
<accession>A1KFN6</accession>
<gene>
    <name evidence="1" type="primary">thiE</name>
    <name type="ordered locus">BCG_0453c</name>
</gene>
<name>THIE_MYCBP</name>
<evidence type="ECO:0000255" key="1">
    <source>
        <dbReference type="HAMAP-Rule" id="MF_00097"/>
    </source>
</evidence>
<feature type="chain" id="PRO_1000008155" description="Thiamine-phosphate synthase">
    <location>
        <begin position="1"/>
        <end position="222"/>
    </location>
</feature>
<feature type="binding site" evidence="1">
    <location>
        <begin position="40"/>
        <end position="44"/>
    </location>
    <ligand>
        <name>4-amino-2-methyl-5-(diphosphooxymethyl)pyrimidine</name>
        <dbReference type="ChEBI" id="CHEBI:57841"/>
    </ligand>
</feature>
<feature type="binding site" evidence="1">
    <location>
        <position position="81"/>
    </location>
    <ligand>
        <name>4-amino-2-methyl-5-(diphosphooxymethyl)pyrimidine</name>
        <dbReference type="ChEBI" id="CHEBI:57841"/>
    </ligand>
</feature>
<feature type="binding site" evidence="1">
    <location>
        <position position="82"/>
    </location>
    <ligand>
        <name>Mg(2+)</name>
        <dbReference type="ChEBI" id="CHEBI:18420"/>
    </ligand>
</feature>
<feature type="binding site" evidence="1">
    <location>
        <position position="101"/>
    </location>
    <ligand>
        <name>Mg(2+)</name>
        <dbReference type="ChEBI" id="CHEBI:18420"/>
    </ligand>
</feature>
<feature type="binding site" evidence="1">
    <location>
        <position position="120"/>
    </location>
    <ligand>
        <name>4-amino-2-methyl-5-(diphosphooxymethyl)pyrimidine</name>
        <dbReference type="ChEBI" id="CHEBI:57841"/>
    </ligand>
</feature>
<feature type="binding site" evidence="1">
    <location>
        <begin position="146"/>
        <end position="148"/>
    </location>
    <ligand>
        <name>2-[(2R,5Z)-2-carboxy-4-methylthiazol-5(2H)-ylidene]ethyl phosphate</name>
        <dbReference type="ChEBI" id="CHEBI:62899"/>
    </ligand>
</feature>
<feature type="binding site" evidence="1">
    <location>
        <position position="149"/>
    </location>
    <ligand>
        <name>4-amino-2-methyl-5-(diphosphooxymethyl)pyrimidine</name>
        <dbReference type="ChEBI" id="CHEBI:57841"/>
    </ligand>
</feature>
<feature type="binding site" evidence="1">
    <location>
        <position position="178"/>
    </location>
    <ligand>
        <name>2-[(2R,5Z)-2-carboxy-4-methylthiazol-5(2H)-ylidene]ethyl phosphate</name>
        <dbReference type="ChEBI" id="CHEBI:62899"/>
    </ligand>
</feature>
<sequence>MHESRLASARLYLCTDARRERGDLAQFAEAALAGGVDIIQLRDKGSPGELRFGPLQARDELAACEILADAAHRYGALFAVNDRADIARAAGADVLHLGQRDLPVNVARQILAPDTLIGRSTHDPDQVAAAAAGDADYFCVGPCWPTPTKPGRAAPGLGLVRVAAELGGDDKPWFAIGGINAQRLPAVLDAGARRIVVVRAITSADDPRAAAEQLRSALTAAN</sequence>
<proteinExistence type="inferred from homology"/>
<reference key="1">
    <citation type="journal article" date="2007" name="Proc. Natl. Acad. Sci. U.S.A.">
        <title>Genome plasticity of BCG and impact on vaccine efficacy.</title>
        <authorList>
            <person name="Brosch R."/>
            <person name="Gordon S.V."/>
            <person name="Garnier T."/>
            <person name="Eiglmeier K."/>
            <person name="Frigui W."/>
            <person name="Valenti P."/>
            <person name="Dos Santos S."/>
            <person name="Duthoy S."/>
            <person name="Lacroix C."/>
            <person name="Garcia-Pelayo C."/>
            <person name="Inwald J.K."/>
            <person name="Golby P."/>
            <person name="Garcia J.N."/>
            <person name="Hewinson R.G."/>
            <person name="Behr M.A."/>
            <person name="Quail M.A."/>
            <person name="Churcher C."/>
            <person name="Barrell B.G."/>
            <person name="Parkhill J."/>
            <person name="Cole S.T."/>
        </authorList>
    </citation>
    <scope>NUCLEOTIDE SEQUENCE [LARGE SCALE GENOMIC DNA]</scope>
    <source>
        <strain>BCG / Pasteur 1173P2</strain>
    </source>
</reference>
<protein>
    <recommendedName>
        <fullName evidence="1">Thiamine-phosphate synthase</fullName>
        <shortName evidence="1">TP synthase</shortName>
        <shortName evidence="1">TPS</shortName>
        <ecNumber evidence="1">2.5.1.3</ecNumber>
    </recommendedName>
    <alternativeName>
        <fullName evidence="1">Thiamine-phosphate pyrophosphorylase</fullName>
        <shortName evidence="1">TMP pyrophosphorylase</shortName>
        <shortName evidence="1">TMP-PPase</shortName>
    </alternativeName>
</protein>